<dbReference type="GO" id="GO:0005576">
    <property type="term" value="C:extracellular region"/>
    <property type="evidence" value="ECO:0007669"/>
    <property type="project" value="UniProtKB-SubCell"/>
</dbReference>
<dbReference type="GO" id="GO:0007218">
    <property type="term" value="P:neuropeptide signaling pathway"/>
    <property type="evidence" value="ECO:0007669"/>
    <property type="project" value="UniProtKB-KW"/>
</dbReference>
<name>TRP7_RHYMA</name>
<reference key="1">
    <citation type="journal article" date="1997" name="Peptides">
        <title>Seven tachykinin-related peptides isolated from the brain of the madeira cockroach; evidence for tissue-specific expression of isoforms.</title>
        <authorList>
            <person name="Muren J.E."/>
            <person name="Naessel D.R."/>
        </authorList>
    </citation>
    <scope>PROTEIN SEQUENCE</scope>
    <scope>AMIDATION AT ARG-10</scope>
    <scope>MASS SPECTROMETRY</scope>
    <source>
        <tissue>Brain</tissue>
    </source>
</reference>
<comment type="function">
    <text>Myoactive peptide. Increases the amplitude and frequency of spontaneous contractions and tonus of hindgut muscle.</text>
</comment>
<comment type="subcellular location">
    <subcellularLocation>
        <location>Secreted</location>
    </subcellularLocation>
</comment>
<comment type="tissue specificity">
    <text>Brain.</text>
</comment>
<comment type="mass spectrometry"/>
<evidence type="ECO:0000269" key="1">
    <source>
    </source>
</evidence>
<feature type="peptide" id="PRO_0000044442" description="Tachykinin-related peptide 7">
    <location>
        <begin position="1"/>
        <end position="10"/>
    </location>
</feature>
<feature type="modified residue" description="Arginine amide" evidence="1">
    <location>
        <position position="10"/>
    </location>
</feature>
<sequence>VPASGFFGMR</sequence>
<protein>
    <recommendedName>
        <fullName>Tachykinin-related peptide 7</fullName>
        <shortName>LemTRP 7</shortName>
    </recommendedName>
</protein>
<proteinExistence type="evidence at protein level"/>
<accession>P81739</accession>
<organism>
    <name type="scientific">Rhyparobia maderae</name>
    <name type="common">Madeira cockroach</name>
    <name type="synonym">Leucophaea maderae</name>
    <dbReference type="NCBI Taxonomy" id="36963"/>
    <lineage>
        <taxon>Eukaryota</taxon>
        <taxon>Metazoa</taxon>
        <taxon>Ecdysozoa</taxon>
        <taxon>Arthropoda</taxon>
        <taxon>Hexapoda</taxon>
        <taxon>Insecta</taxon>
        <taxon>Pterygota</taxon>
        <taxon>Neoptera</taxon>
        <taxon>Polyneoptera</taxon>
        <taxon>Dictyoptera</taxon>
        <taxon>Blattodea</taxon>
        <taxon>Blaberoidea</taxon>
        <taxon>Blaberidae</taxon>
        <taxon>Oxyhaloinae</taxon>
        <taxon>Rhyparobia</taxon>
    </lineage>
</organism>
<keyword id="KW-0027">Amidation</keyword>
<keyword id="KW-0903">Direct protein sequencing</keyword>
<keyword id="KW-0527">Neuropeptide</keyword>
<keyword id="KW-0964">Secreted</keyword>